<feature type="chain" id="PRO_0000258345" description="Phosphoribosylformylglycinamidine cyclo-ligase">
    <location>
        <begin position="1"/>
        <end position="343"/>
    </location>
</feature>
<organism>
    <name type="scientific">Carboxydothermus hydrogenoformans (strain ATCC BAA-161 / DSM 6008 / Z-2901)</name>
    <dbReference type="NCBI Taxonomy" id="246194"/>
    <lineage>
        <taxon>Bacteria</taxon>
        <taxon>Bacillati</taxon>
        <taxon>Bacillota</taxon>
        <taxon>Clostridia</taxon>
        <taxon>Thermoanaerobacterales</taxon>
        <taxon>Thermoanaerobacteraceae</taxon>
        <taxon>Carboxydothermus</taxon>
    </lineage>
</organism>
<name>PUR5_CARHZ</name>
<keyword id="KW-0067">ATP-binding</keyword>
<keyword id="KW-0963">Cytoplasm</keyword>
<keyword id="KW-0436">Ligase</keyword>
<keyword id="KW-0547">Nucleotide-binding</keyword>
<keyword id="KW-0658">Purine biosynthesis</keyword>
<keyword id="KW-1185">Reference proteome</keyword>
<sequence>MEELTYKAAGVDIDAGMDVVRRIKSEVEKTLNPNVLAGIGGFSALYCLDVTGYNEPVLVSSTDGVGTKLKIAQALGKYDTIGIDLVAMVVNDLLTVGAKPLFFLDYVAVGKLNPEQVADLVKGMAEGCLEADCALVGGETAEMPGVYHPGDFDIAGFGVGVVEKSKIIDGSSVKAGDVIIGVASSGIHSNGLSLARKALLEYGNYHLTAYVEEFGKTLGEELLTPTRIYVKPVLDLMQKVEIKGMAHITGGGIVDNLPRILPEKVEARITVNWEIPKIFKLIEKAGNVPRREMWRTFNMGIGFILIVEEAKVQEAIKTLESFNYKAWVIGEITAGERRVIINE</sequence>
<evidence type="ECO:0000255" key="1">
    <source>
        <dbReference type="HAMAP-Rule" id="MF_00741"/>
    </source>
</evidence>
<proteinExistence type="inferred from homology"/>
<dbReference type="EC" id="6.3.3.1" evidence="1"/>
<dbReference type="EMBL" id="CP000141">
    <property type="protein sequence ID" value="ABB15319.1"/>
    <property type="molecule type" value="Genomic_DNA"/>
</dbReference>
<dbReference type="RefSeq" id="WP_011343998.1">
    <property type="nucleotide sequence ID" value="NC_007503.1"/>
</dbReference>
<dbReference type="SMR" id="Q3AD62"/>
<dbReference type="FunCoup" id="Q3AD62">
    <property type="interactions" value="433"/>
</dbReference>
<dbReference type="STRING" id="246194.CHY_1076"/>
<dbReference type="KEGG" id="chy:CHY_1076"/>
<dbReference type="eggNOG" id="COG0150">
    <property type="taxonomic scope" value="Bacteria"/>
</dbReference>
<dbReference type="HOGENOM" id="CLU_047116_0_0_9"/>
<dbReference type="InParanoid" id="Q3AD62"/>
<dbReference type="OrthoDB" id="9802507at2"/>
<dbReference type="UniPathway" id="UPA00074">
    <property type="reaction ID" value="UER00129"/>
</dbReference>
<dbReference type="Proteomes" id="UP000002706">
    <property type="component" value="Chromosome"/>
</dbReference>
<dbReference type="GO" id="GO:0005829">
    <property type="term" value="C:cytosol"/>
    <property type="evidence" value="ECO:0007669"/>
    <property type="project" value="TreeGrafter"/>
</dbReference>
<dbReference type="GO" id="GO:0005524">
    <property type="term" value="F:ATP binding"/>
    <property type="evidence" value="ECO:0007669"/>
    <property type="project" value="UniProtKB-KW"/>
</dbReference>
<dbReference type="GO" id="GO:0004637">
    <property type="term" value="F:phosphoribosylamine-glycine ligase activity"/>
    <property type="evidence" value="ECO:0007669"/>
    <property type="project" value="TreeGrafter"/>
</dbReference>
<dbReference type="GO" id="GO:0004641">
    <property type="term" value="F:phosphoribosylformylglycinamidine cyclo-ligase activity"/>
    <property type="evidence" value="ECO:0007669"/>
    <property type="project" value="UniProtKB-UniRule"/>
</dbReference>
<dbReference type="GO" id="GO:0006189">
    <property type="term" value="P:'de novo' IMP biosynthetic process"/>
    <property type="evidence" value="ECO:0007669"/>
    <property type="project" value="UniProtKB-UniRule"/>
</dbReference>
<dbReference type="GO" id="GO:0046084">
    <property type="term" value="P:adenine biosynthetic process"/>
    <property type="evidence" value="ECO:0007669"/>
    <property type="project" value="TreeGrafter"/>
</dbReference>
<dbReference type="CDD" id="cd02196">
    <property type="entry name" value="PurM"/>
    <property type="match status" value="1"/>
</dbReference>
<dbReference type="FunFam" id="3.30.1330.10:FF:000001">
    <property type="entry name" value="Phosphoribosylformylglycinamidine cyclo-ligase"/>
    <property type="match status" value="1"/>
</dbReference>
<dbReference type="FunFam" id="3.90.650.10:FF:000011">
    <property type="entry name" value="Phosphoribosylformylglycinamidine cyclo-ligase"/>
    <property type="match status" value="1"/>
</dbReference>
<dbReference type="Gene3D" id="3.90.650.10">
    <property type="entry name" value="PurM-like C-terminal domain"/>
    <property type="match status" value="1"/>
</dbReference>
<dbReference type="Gene3D" id="3.30.1330.10">
    <property type="entry name" value="PurM-like, N-terminal domain"/>
    <property type="match status" value="1"/>
</dbReference>
<dbReference type="HAMAP" id="MF_00741">
    <property type="entry name" value="AIRS"/>
    <property type="match status" value="1"/>
</dbReference>
<dbReference type="InterPro" id="IPR010918">
    <property type="entry name" value="PurM-like_C_dom"/>
</dbReference>
<dbReference type="InterPro" id="IPR036676">
    <property type="entry name" value="PurM-like_C_sf"/>
</dbReference>
<dbReference type="InterPro" id="IPR016188">
    <property type="entry name" value="PurM-like_N"/>
</dbReference>
<dbReference type="InterPro" id="IPR036921">
    <property type="entry name" value="PurM-like_N_sf"/>
</dbReference>
<dbReference type="InterPro" id="IPR004733">
    <property type="entry name" value="PurM_cligase"/>
</dbReference>
<dbReference type="NCBIfam" id="TIGR00878">
    <property type="entry name" value="purM"/>
    <property type="match status" value="1"/>
</dbReference>
<dbReference type="PANTHER" id="PTHR10520:SF12">
    <property type="entry name" value="TRIFUNCTIONAL PURINE BIOSYNTHETIC PROTEIN ADENOSINE-3"/>
    <property type="match status" value="1"/>
</dbReference>
<dbReference type="PANTHER" id="PTHR10520">
    <property type="entry name" value="TRIFUNCTIONAL PURINE BIOSYNTHETIC PROTEIN ADENOSINE-3-RELATED"/>
    <property type="match status" value="1"/>
</dbReference>
<dbReference type="Pfam" id="PF00586">
    <property type="entry name" value="AIRS"/>
    <property type="match status" value="1"/>
</dbReference>
<dbReference type="Pfam" id="PF02769">
    <property type="entry name" value="AIRS_C"/>
    <property type="match status" value="1"/>
</dbReference>
<dbReference type="SUPFAM" id="SSF56042">
    <property type="entry name" value="PurM C-terminal domain-like"/>
    <property type="match status" value="1"/>
</dbReference>
<dbReference type="SUPFAM" id="SSF55326">
    <property type="entry name" value="PurM N-terminal domain-like"/>
    <property type="match status" value="1"/>
</dbReference>
<comment type="catalytic activity">
    <reaction evidence="1">
        <text>2-formamido-N(1)-(5-O-phospho-beta-D-ribosyl)acetamidine + ATP = 5-amino-1-(5-phospho-beta-D-ribosyl)imidazole + ADP + phosphate + H(+)</text>
        <dbReference type="Rhea" id="RHEA:23032"/>
        <dbReference type="ChEBI" id="CHEBI:15378"/>
        <dbReference type="ChEBI" id="CHEBI:30616"/>
        <dbReference type="ChEBI" id="CHEBI:43474"/>
        <dbReference type="ChEBI" id="CHEBI:137981"/>
        <dbReference type="ChEBI" id="CHEBI:147287"/>
        <dbReference type="ChEBI" id="CHEBI:456216"/>
        <dbReference type="EC" id="6.3.3.1"/>
    </reaction>
</comment>
<comment type="pathway">
    <text evidence="1">Purine metabolism; IMP biosynthesis via de novo pathway; 5-amino-1-(5-phospho-D-ribosyl)imidazole from N(2)-formyl-N(1)-(5-phospho-D-ribosyl)glycinamide: step 2/2.</text>
</comment>
<comment type="subcellular location">
    <subcellularLocation>
        <location evidence="1">Cytoplasm</location>
    </subcellularLocation>
</comment>
<comment type="similarity">
    <text evidence="1">Belongs to the AIR synthase family.</text>
</comment>
<reference key="1">
    <citation type="journal article" date="2005" name="PLoS Genet.">
        <title>Life in hot carbon monoxide: the complete genome sequence of Carboxydothermus hydrogenoformans Z-2901.</title>
        <authorList>
            <person name="Wu M."/>
            <person name="Ren Q."/>
            <person name="Durkin A.S."/>
            <person name="Daugherty S.C."/>
            <person name="Brinkac L.M."/>
            <person name="Dodson R.J."/>
            <person name="Madupu R."/>
            <person name="Sullivan S.A."/>
            <person name="Kolonay J.F."/>
            <person name="Nelson W.C."/>
            <person name="Tallon L.J."/>
            <person name="Jones K.M."/>
            <person name="Ulrich L.E."/>
            <person name="Gonzalez J.M."/>
            <person name="Zhulin I.B."/>
            <person name="Robb F.T."/>
            <person name="Eisen J.A."/>
        </authorList>
    </citation>
    <scope>NUCLEOTIDE SEQUENCE [LARGE SCALE GENOMIC DNA]</scope>
    <source>
        <strain>ATCC BAA-161 / DSM 6008 / Z-2901</strain>
    </source>
</reference>
<gene>
    <name evidence="1" type="primary">purM</name>
    <name type="ordered locus">CHY_1076</name>
</gene>
<accession>Q3AD62</accession>
<protein>
    <recommendedName>
        <fullName evidence="1">Phosphoribosylformylglycinamidine cyclo-ligase</fullName>
        <ecNumber evidence="1">6.3.3.1</ecNumber>
    </recommendedName>
    <alternativeName>
        <fullName evidence="1">AIR synthase</fullName>
    </alternativeName>
    <alternativeName>
        <fullName evidence="1">AIRS</fullName>
    </alternativeName>
    <alternativeName>
        <fullName evidence="1">Phosphoribosyl-aminoimidazole synthetase</fullName>
    </alternativeName>
</protein>